<keyword id="KW-0002">3D-structure</keyword>
<keyword id="KW-1003">Cell membrane</keyword>
<keyword id="KW-0249">Electron transport</keyword>
<keyword id="KW-0285">Flavoprotein</keyword>
<keyword id="KW-0288">FMN</keyword>
<keyword id="KW-0472">Membrane</keyword>
<keyword id="KW-0520">NAD</keyword>
<keyword id="KW-0597">Phosphoprotein</keyword>
<keyword id="KW-1185">Reference proteome</keyword>
<keyword id="KW-1278">Translocase</keyword>
<keyword id="KW-0812">Transmembrane</keyword>
<keyword id="KW-1133">Transmembrane helix</keyword>
<keyword id="KW-0813">Transport</keyword>
<proteinExistence type="evidence at protein level"/>
<feature type="chain" id="PRO_0000443496" description="Na(+)-translocating ferredoxin:NAD(+) oxidoreductase complex subunit G">
    <location>
        <begin position="1"/>
        <end position="207"/>
    </location>
</feature>
<feature type="transmembrane region" description="Helical" evidence="1">
    <location>
        <begin position="18"/>
        <end position="38"/>
    </location>
</feature>
<feature type="modified residue" description="FMN phosphoryl threonine" evidence="1">
    <location>
        <position position="185"/>
    </location>
</feature>
<evidence type="ECO:0000255" key="1">
    <source>
        <dbReference type="HAMAP-Rule" id="MF_00479"/>
    </source>
</evidence>
<evidence type="ECO:0000269" key="2">
    <source>
    </source>
</evidence>
<evidence type="ECO:0000269" key="3">
    <source>
    </source>
</evidence>
<evidence type="ECO:0000269" key="4">
    <source>
    </source>
</evidence>
<evidence type="ECO:0000303" key="5">
    <source>
    </source>
</evidence>
<evidence type="ECO:0000305" key="6"/>
<evidence type="ECO:0000305" key="7">
    <source>
    </source>
</evidence>
<evidence type="ECO:0000312" key="8">
    <source>
        <dbReference type="EMBL" id="AFA48978.1"/>
    </source>
</evidence>
<accession>H6LC30</accession>
<accession>C4N8U2</accession>
<reference key="1">
    <citation type="journal article" date="2009" name="Environ. Microbiol.">
        <title>Genetic, immunological and biochemical evidence for a Rnf complex in the acetogen Acetobacterium woodii.</title>
        <authorList>
            <person name="Biegel E."/>
            <person name="Schmidt S."/>
            <person name="Muller V."/>
        </authorList>
    </citation>
    <scope>NUCLEOTIDE SEQUENCE [GENOMIC DNA]</scope>
    <scope>SUBCELLULAR LOCATION</scope>
    <source>
        <strain>ATCC 29683 / DSM 1030 / JCM 2381 / KCTC 1655 / WB1</strain>
    </source>
</reference>
<reference key="2">
    <citation type="submission" date="2011-07" db="EMBL/GenBank/DDBJ databases">
        <title>Complete genome sequence of Acetobacterium woodii.</title>
        <authorList>
            <person name="Poehlein A."/>
            <person name="Schmidt S."/>
            <person name="Kaster A.-K."/>
            <person name="Goenrich M."/>
            <person name="Vollmers J."/>
            <person name="Thuermer A."/>
            <person name="Gottschalk G."/>
            <person name="Thauer R.K."/>
            <person name="Daniel R."/>
            <person name="Mueller V."/>
        </authorList>
    </citation>
    <scope>NUCLEOTIDE SEQUENCE [LARGE SCALE GENOMIC DNA]</scope>
    <source>
        <strain>ATCC 29683 / DSM 1030 / JCM 2381 / KCTC 1655 / WB1</strain>
    </source>
</reference>
<reference key="3">
    <citation type="journal article" date="2010" name="Proc. Natl. Acad. Sci. U.S.A.">
        <title>Bacterial Na+-translocating ferredoxin:NAD+ oxidoreductase.</title>
        <authorList>
            <person name="Biegel E."/>
            <person name="Mueller V."/>
        </authorList>
    </citation>
    <scope>FUNCTION</scope>
    <scope>CATALYTIC ACTIVITY</scope>
    <scope>SUBUNIT</scope>
    <source>
        <strain>ATCC 29683 / DSM 1030 / JCM 2381 / KCTC 1655 / WB1</strain>
    </source>
</reference>
<reference key="4">
    <citation type="journal article" date="2013" name="J. Biol. Chem.">
        <title>The ferredoxin:NAD+ oxidoreductase (Rnf) from the acetogen Acetobacterium woodii requires Na+ and is reversibly coupled to the membrane potential.</title>
        <authorList>
            <person name="Hess V."/>
            <person name="Schuchmann K."/>
            <person name="Mueller V."/>
        </authorList>
    </citation>
    <scope>FUNCTION</scope>
    <scope>CATALYTIC ACTIVITY</scope>
    <source>
        <strain>ATCC 29683 / DSM 1030 / JCM 2381 / KCTC 1655 / WB1</strain>
    </source>
</reference>
<sequence length="207" mass="21832">METKEKVQIDWKVVFKLGLILFVISAVAACALALTNYVTAGTIEEMNVQTNTVARQEVLPKAADFEAVPAKDVEKIASEIGMEKPEELLEVYIGKSNGEVVGYTVKTGPTSGYAGEVQVLTGISADGVITGITIIKSNETPGLGAKASGVWNDQFTGKSAKEELVVVKGTTKEGSNEIQAITGSTITSKAVTSGVNMSIQVYQNLSK</sequence>
<gene>
    <name evidence="1 5" type="primary">rnfG</name>
    <name evidence="8" type="ordered locus">Awo_c22040</name>
</gene>
<protein>
    <recommendedName>
        <fullName evidence="6">Na(+)-translocating ferredoxin:NAD(+) oxidoreductase complex subunit G</fullName>
        <ecNumber evidence="3 4">7.2.1.2</ecNumber>
    </recommendedName>
    <alternativeName>
        <fullName evidence="1 6">Rnf electron transport complex subunit G</fullName>
    </alternativeName>
</protein>
<dbReference type="EC" id="7.2.1.2" evidence="3 4"/>
<dbReference type="EMBL" id="FJ416148">
    <property type="protein sequence ID" value="ACR23744.1"/>
    <property type="molecule type" value="Genomic_DNA"/>
</dbReference>
<dbReference type="EMBL" id="CP002987">
    <property type="protein sequence ID" value="AFA48978.1"/>
    <property type="molecule type" value="Genomic_DNA"/>
</dbReference>
<dbReference type="RefSeq" id="WP_014356578.1">
    <property type="nucleotide sequence ID" value="NC_016894.1"/>
</dbReference>
<dbReference type="PDB" id="9ERI">
    <property type="method" value="EM"/>
    <property type="resolution" value="3.30 A"/>
    <property type="chains" value="G=1-207"/>
</dbReference>
<dbReference type="PDB" id="9ERJ">
    <property type="method" value="EM"/>
    <property type="resolution" value="2.90 A"/>
    <property type="chains" value="G=1-207"/>
</dbReference>
<dbReference type="PDB" id="9ERK">
    <property type="method" value="EM"/>
    <property type="resolution" value="2.80 A"/>
    <property type="chains" value="G=1-207"/>
</dbReference>
<dbReference type="PDB" id="9ERL">
    <property type="method" value="EM"/>
    <property type="resolution" value="3.00 A"/>
    <property type="chains" value="G=1-207"/>
</dbReference>
<dbReference type="PDBsum" id="9ERI"/>
<dbReference type="PDBsum" id="9ERJ"/>
<dbReference type="PDBsum" id="9ERK"/>
<dbReference type="PDBsum" id="9ERL"/>
<dbReference type="EMDB" id="EMD-19915"/>
<dbReference type="EMDB" id="EMD-19916"/>
<dbReference type="EMDB" id="EMD-19919"/>
<dbReference type="EMDB" id="EMD-19920"/>
<dbReference type="SMR" id="H6LC30"/>
<dbReference type="STRING" id="931626.Awo_c22040"/>
<dbReference type="TCDB" id="3.D.6.1.2">
    <property type="family name" value="the ion (h(+) or na(+))-translocating nadh:ferredoxin oxidoreductase (nfo or rnf) family"/>
</dbReference>
<dbReference type="KEGG" id="awo:Awo_c22040"/>
<dbReference type="eggNOG" id="COG4659">
    <property type="taxonomic scope" value="Bacteria"/>
</dbReference>
<dbReference type="HOGENOM" id="CLU_077882_2_1_9"/>
<dbReference type="OrthoDB" id="9787579at2"/>
<dbReference type="BioCyc" id="MetaCyc:MONOMER-21344"/>
<dbReference type="BRENDA" id="7.2.1.2">
    <property type="organism ID" value="52"/>
</dbReference>
<dbReference type="Proteomes" id="UP000007177">
    <property type="component" value="Chromosome"/>
</dbReference>
<dbReference type="GO" id="GO:0005886">
    <property type="term" value="C:plasma membrane"/>
    <property type="evidence" value="ECO:0000314"/>
    <property type="project" value="CACAO"/>
</dbReference>
<dbReference type="GO" id="GO:0009055">
    <property type="term" value="F:electron transfer activity"/>
    <property type="evidence" value="ECO:0007669"/>
    <property type="project" value="InterPro"/>
</dbReference>
<dbReference type="GO" id="GO:0010181">
    <property type="term" value="F:FMN binding"/>
    <property type="evidence" value="ECO:0007669"/>
    <property type="project" value="InterPro"/>
</dbReference>
<dbReference type="GO" id="GO:0022900">
    <property type="term" value="P:electron transport chain"/>
    <property type="evidence" value="ECO:0007669"/>
    <property type="project" value="UniProtKB-UniRule"/>
</dbReference>
<dbReference type="HAMAP" id="MF_00479">
    <property type="entry name" value="RsxG_RnfG"/>
    <property type="match status" value="1"/>
</dbReference>
<dbReference type="InterPro" id="IPR007329">
    <property type="entry name" value="FMN-bd"/>
</dbReference>
<dbReference type="InterPro" id="IPR010209">
    <property type="entry name" value="Ion_transpt_RnfG/RsxG"/>
</dbReference>
<dbReference type="NCBIfam" id="TIGR01947">
    <property type="entry name" value="rnfG"/>
    <property type="match status" value="1"/>
</dbReference>
<dbReference type="PANTHER" id="PTHR36118">
    <property type="entry name" value="ION-TRANSLOCATING OXIDOREDUCTASE COMPLEX SUBUNIT G"/>
    <property type="match status" value="1"/>
</dbReference>
<dbReference type="PANTHER" id="PTHR36118:SF1">
    <property type="entry name" value="ION-TRANSLOCATING OXIDOREDUCTASE COMPLEX SUBUNIT G"/>
    <property type="match status" value="1"/>
</dbReference>
<dbReference type="Pfam" id="PF04205">
    <property type="entry name" value="FMN_bind"/>
    <property type="match status" value="1"/>
</dbReference>
<dbReference type="PIRSF" id="PIRSF006091">
    <property type="entry name" value="E_trnsport_RnfG"/>
    <property type="match status" value="1"/>
</dbReference>
<dbReference type="SMART" id="SM00900">
    <property type="entry name" value="FMN_bind"/>
    <property type="match status" value="1"/>
</dbReference>
<name>RNFG_ACEWD</name>
<organism>
    <name type="scientific">Acetobacterium woodii (strain ATCC 29683 / DSM 1030 / JCM 2381 / KCTC 1655 / WB1)</name>
    <dbReference type="NCBI Taxonomy" id="931626"/>
    <lineage>
        <taxon>Bacteria</taxon>
        <taxon>Bacillati</taxon>
        <taxon>Bacillota</taxon>
        <taxon>Clostridia</taxon>
        <taxon>Eubacteriales</taxon>
        <taxon>Eubacteriaceae</taxon>
        <taxon>Acetobacterium</taxon>
    </lineage>
</organism>
<comment type="function">
    <text evidence="3 4">Part of a membrane-bound complex that couples electron transfer with translocation of ions across the membrane. Couples electron transfer from reduced ferredoxin to NAD(+) with electrogenic movement of Na(+) out of the cell. Involved in caffeate respiration.</text>
</comment>
<comment type="catalytic activity">
    <reaction evidence="3 4">
        <text>2 reduced [2Fe-2S]-[ferredoxin] + Na(+)(in) + NAD(+) + H(+) = 2 oxidized [2Fe-2S]-[ferredoxin] + Na(+)(out) + NADH</text>
        <dbReference type="Rhea" id="RHEA:46800"/>
        <dbReference type="Rhea" id="RHEA-COMP:10000"/>
        <dbReference type="Rhea" id="RHEA-COMP:10001"/>
        <dbReference type="ChEBI" id="CHEBI:15378"/>
        <dbReference type="ChEBI" id="CHEBI:29101"/>
        <dbReference type="ChEBI" id="CHEBI:33737"/>
        <dbReference type="ChEBI" id="CHEBI:33738"/>
        <dbReference type="ChEBI" id="CHEBI:57540"/>
        <dbReference type="ChEBI" id="CHEBI:57945"/>
        <dbReference type="EC" id="7.2.1.2"/>
    </reaction>
</comment>
<comment type="cofactor">
    <cofactor evidence="1">
        <name>FMN</name>
        <dbReference type="ChEBI" id="CHEBI:58210"/>
    </cofactor>
</comment>
<comment type="subunit">
    <text evidence="1 7">The complex is composed of six subunits: RnfA, RnfB, RnfC, RnfD, RnfE and RnfG.</text>
</comment>
<comment type="subcellular location">
    <subcellularLocation>
        <location evidence="1 2">Cell membrane</location>
        <topology evidence="1">Single-pass membrane protein</topology>
    </subcellularLocation>
</comment>
<comment type="similarity">
    <text evidence="1">Belongs to the RnfG family.</text>
</comment>